<keyword id="KW-0456">Lyase</keyword>
<keyword id="KW-1185">Reference proteome</keyword>
<comment type="catalytic activity">
    <reaction evidence="1">
        <text>(4aS,6R)-4a-hydroxy-L-erythro-5,6,7,8-tetrahydrobiopterin = (6R)-L-erythro-6,7-dihydrobiopterin + H2O</text>
        <dbReference type="Rhea" id="RHEA:11920"/>
        <dbReference type="ChEBI" id="CHEBI:15377"/>
        <dbReference type="ChEBI" id="CHEBI:15642"/>
        <dbReference type="ChEBI" id="CHEBI:43120"/>
        <dbReference type="EC" id="4.2.1.96"/>
    </reaction>
</comment>
<comment type="similarity">
    <text evidence="1">Belongs to the pterin-4-alpha-carbinolamine dehydratase family.</text>
</comment>
<gene>
    <name type="ordered locus">Ppha_0103</name>
</gene>
<protein>
    <recommendedName>
        <fullName evidence="1">Putative pterin-4-alpha-carbinolamine dehydratase</fullName>
        <shortName evidence="1">PHS</shortName>
        <ecNumber evidence="1">4.2.1.96</ecNumber>
    </recommendedName>
    <alternativeName>
        <fullName evidence="1">4-alpha-hydroxy-tetrahydropterin dehydratase</fullName>
    </alternativeName>
    <alternativeName>
        <fullName evidence="1">Pterin carbinolamine dehydratase</fullName>
        <shortName evidence="1">PCD</shortName>
    </alternativeName>
</protein>
<dbReference type="EC" id="4.2.1.96" evidence="1"/>
<dbReference type="EMBL" id="CP001110">
    <property type="protein sequence ID" value="ACF42459.1"/>
    <property type="molecule type" value="Genomic_DNA"/>
</dbReference>
<dbReference type="RefSeq" id="WP_012506957.1">
    <property type="nucleotide sequence ID" value="NC_011060.1"/>
</dbReference>
<dbReference type="SMR" id="B4SAU0"/>
<dbReference type="STRING" id="324925.Ppha_0103"/>
<dbReference type="KEGG" id="pph:Ppha_0103"/>
<dbReference type="eggNOG" id="COG2154">
    <property type="taxonomic scope" value="Bacteria"/>
</dbReference>
<dbReference type="HOGENOM" id="CLU_081974_2_2_10"/>
<dbReference type="OrthoDB" id="9800108at2"/>
<dbReference type="Proteomes" id="UP000002724">
    <property type="component" value="Chromosome"/>
</dbReference>
<dbReference type="GO" id="GO:0008124">
    <property type="term" value="F:4-alpha-hydroxytetrahydrobiopterin dehydratase activity"/>
    <property type="evidence" value="ECO:0007669"/>
    <property type="project" value="UniProtKB-UniRule"/>
</dbReference>
<dbReference type="GO" id="GO:0006729">
    <property type="term" value="P:tetrahydrobiopterin biosynthetic process"/>
    <property type="evidence" value="ECO:0007669"/>
    <property type="project" value="InterPro"/>
</dbReference>
<dbReference type="CDD" id="cd00913">
    <property type="entry name" value="PCD_DCoH_subfamily_a"/>
    <property type="match status" value="1"/>
</dbReference>
<dbReference type="Gene3D" id="3.30.1360.20">
    <property type="entry name" value="Transcriptional coactivator/pterin dehydratase"/>
    <property type="match status" value="1"/>
</dbReference>
<dbReference type="HAMAP" id="MF_00434">
    <property type="entry name" value="Pterin_4_alpha"/>
    <property type="match status" value="1"/>
</dbReference>
<dbReference type="InterPro" id="IPR036428">
    <property type="entry name" value="PCD_sf"/>
</dbReference>
<dbReference type="InterPro" id="IPR050376">
    <property type="entry name" value="Pterin-4-alpha-carb_dehyd"/>
</dbReference>
<dbReference type="InterPro" id="IPR001533">
    <property type="entry name" value="Pterin_deHydtase"/>
</dbReference>
<dbReference type="NCBIfam" id="NF002016">
    <property type="entry name" value="PRK00823.1-1"/>
    <property type="match status" value="1"/>
</dbReference>
<dbReference type="PANTHER" id="PTHR42805">
    <property type="entry name" value="PTERIN-4-ALPHA-CARBINOLAMINE DEHYDRATASE-RELATED"/>
    <property type="match status" value="1"/>
</dbReference>
<dbReference type="PANTHER" id="PTHR42805:SF1">
    <property type="entry name" value="PTERIN-4-ALPHA-CARBINOLAMINE DEHYDRATASE-RELATED"/>
    <property type="match status" value="1"/>
</dbReference>
<dbReference type="Pfam" id="PF01329">
    <property type="entry name" value="Pterin_4a"/>
    <property type="match status" value="1"/>
</dbReference>
<dbReference type="SUPFAM" id="SSF55248">
    <property type="entry name" value="PCD-like"/>
    <property type="match status" value="1"/>
</dbReference>
<evidence type="ECO:0000255" key="1">
    <source>
        <dbReference type="HAMAP-Rule" id="MF_00434"/>
    </source>
</evidence>
<proteinExistence type="inferred from homology"/>
<reference key="1">
    <citation type="submission" date="2008-06" db="EMBL/GenBank/DDBJ databases">
        <title>Complete sequence of Pelodictyon phaeoclathratiforme BU-1.</title>
        <authorList>
            <consortium name="US DOE Joint Genome Institute"/>
            <person name="Lucas S."/>
            <person name="Copeland A."/>
            <person name="Lapidus A."/>
            <person name="Glavina del Rio T."/>
            <person name="Dalin E."/>
            <person name="Tice H."/>
            <person name="Bruce D."/>
            <person name="Goodwin L."/>
            <person name="Pitluck S."/>
            <person name="Schmutz J."/>
            <person name="Larimer F."/>
            <person name="Land M."/>
            <person name="Hauser L."/>
            <person name="Kyrpides N."/>
            <person name="Mikhailova N."/>
            <person name="Liu Z."/>
            <person name="Li T."/>
            <person name="Zhao F."/>
            <person name="Overmann J."/>
            <person name="Bryant D.A."/>
            <person name="Richardson P."/>
        </authorList>
    </citation>
    <scope>NUCLEOTIDE SEQUENCE [LARGE SCALE GENOMIC DNA]</scope>
    <source>
        <strain>DSM 5477 / BU-1</strain>
    </source>
</reference>
<accession>B4SAU0</accession>
<sequence>MKGLNYMLCIPHTSVSRSMLEAQCRRLINNIPGWELIRVENMMRLRCTFTFPDFREALAFTNSVGELAEAEQHHPELITEWGKVTVTWWTHSVKGVHMNDFIMAARTGVVANI</sequence>
<feature type="chain" id="PRO_1000192925" description="Putative pterin-4-alpha-carbinolamine dehydratase">
    <location>
        <begin position="1"/>
        <end position="113"/>
    </location>
</feature>
<organism>
    <name type="scientific">Pelodictyon phaeoclathratiforme (strain DSM 5477 / BU-1)</name>
    <dbReference type="NCBI Taxonomy" id="324925"/>
    <lineage>
        <taxon>Bacteria</taxon>
        <taxon>Pseudomonadati</taxon>
        <taxon>Chlorobiota</taxon>
        <taxon>Chlorobiia</taxon>
        <taxon>Chlorobiales</taxon>
        <taxon>Chlorobiaceae</taxon>
        <taxon>Chlorobium/Pelodictyon group</taxon>
        <taxon>Pelodictyon</taxon>
    </lineage>
</organism>
<name>PHS_PELPB</name>